<evidence type="ECO:0000255" key="1">
    <source>
        <dbReference type="HAMAP-Rule" id="MF_01143"/>
    </source>
</evidence>
<protein>
    <recommendedName>
        <fullName evidence="1">Holin-like protein CidA</fullName>
    </recommendedName>
</protein>
<keyword id="KW-1003">Cell membrane</keyword>
<keyword id="KW-0204">Cytolysis</keyword>
<keyword id="KW-0472">Membrane</keyword>
<keyword id="KW-0812">Transmembrane</keyword>
<keyword id="KW-1133">Transmembrane helix</keyword>
<gene>
    <name evidence="1" type="primary">cidA</name>
    <name type="ordered locus">BCB4264_A3777</name>
</gene>
<name>CIDA_BACC4</name>
<accession>B7HCE7</accession>
<dbReference type="EMBL" id="CP001176">
    <property type="protein sequence ID" value="ACK58899.1"/>
    <property type="molecule type" value="Genomic_DNA"/>
</dbReference>
<dbReference type="RefSeq" id="WP_000872365.1">
    <property type="nucleotide sequence ID" value="NZ_VEHB01000002.1"/>
</dbReference>
<dbReference type="SMR" id="B7HCE7"/>
<dbReference type="KEGG" id="bcb:BCB4264_A3777"/>
<dbReference type="HOGENOM" id="CLU_113736_3_2_9"/>
<dbReference type="Proteomes" id="UP000007096">
    <property type="component" value="Chromosome"/>
</dbReference>
<dbReference type="GO" id="GO:0005886">
    <property type="term" value="C:plasma membrane"/>
    <property type="evidence" value="ECO:0007669"/>
    <property type="project" value="UniProtKB-SubCell"/>
</dbReference>
<dbReference type="GO" id="GO:0019835">
    <property type="term" value="P:cytolysis"/>
    <property type="evidence" value="ECO:0007669"/>
    <property type="project" value="UniProtKB-UniRule"/>
</dbReference>
<dbReference type="GO" id="GO:0031640">
    <property type="term" value="P:killing of cells of another organism"/>
    <property type="evidence" value="ECO:0007669"/>
    <property type="project" value="UniProtKB-KW"/>
</dbReference>
<dbReference type="GO" id="GO:0012501">
    <property type="term" value="P:programmed cell death"/>
    <property type="evidence" value="ECO:0007669"/>
    <property type="project" value="UniProtKB-UniRule"/>
</dbReference>
<dbReference type="HAMAP" id="MF_01143">
    <property type="entry name" value="CidA"/>
    <property type="match status" value="1"/>
</dbReference>
<dbReference type="InterPro" id="IPR023760">
    <property type="entry name" value="Holin-like_CidA"/>
</dbReference>
<dbReference type="InterPro" id="IPR005538">
    <property type="entry name" value="LrgA/CidA"/>
</dbReference>
<dbReference type="NCBIfam" id="NF002460">
    <property type="entry name" value="PRK01658.1"/>
    <property type="match status" value="1"/>
</dbReference>
<dbReference type="PANTHER" id="PTHR33931:SF2">
    <property type="entry name" value="HOLIN-LIKE PROTEIN CIDA"/>
    <property type="match status" value="1"/>
</dbReference>
<dbReference type="PANTHER" id="PTHR33931">
    <property type="entry name" value="HOLIN-LIKE PROTEIN CIDA-RELATED"/>
    <property type="match status" value="1"/>
</dbReference>
<dbReference type="Pfam" id="PF03788">
    <property type="entry name" value="LrgA"/>
    <property type="match status" value="1"/>
</dbReference>
<organism>
    <name type="scientific">Bacillus cereus (strain B4264)</name>
    <dbReference type="NCBI Taxonomy" id="405532"/>
    <lineage>
        <taxon>Bacteria</taxon>
        <taxon>Bacillati</taxon>
        <taxon>Bacillota</taxon>
        <taxon>Bacilli</taxon>
        <taxon>Bacillales</taxon>
        <taxon>Bacillaceae</taxon>
        <taxon>Bacillus</taxon>
        <taxon>Bacillus cereus group</taxon>
    </lineage>
</organism>
<comment type="function">
    <text evidence="1">Increases the activity of extracellular murein hydrolases possibly by mediating their export via hole formation. Inhibited by the antiholin-like proteins LrgAB. In an unstressed cell, the LrgAB products probably inhibit the function of the CidA protein. When a cell is stressed by the addition of antibiotics or by other factors in the environment, CidA possibly oligomerizes within the bacterial cell membrane, creating lesions that disrupt the proton motive force, which in turn results in loss of cell viability. These lesions are also hypothesized to regulate the subsequent cell lysis by either allowing the murein hydrolases access to the cell wall substrate and/or regulating their activity by a possible change in the cell wall pH that results from loss of membrane potential.</text>
</comment>
<comment type="subcellular location">
    <subcellularLocation>
        <location evidence="1">Cell membrane</location>
        <topology evidence="1">Multi-pass membrane protein</topology>
    </subcellularLocation>
</comment>
<comment type="similarity">
    <text evidence="1">Belongs to the CidA/LrgA family. CidA subfamily.</text>
</comment>
<feature type="chain" id="PRO_1000137353" description="Holin-like protein CidA">
    <location>
        <begin position="1"/>
        <end position="121"/>
    </location>
</feature>
<feature type="transmembrane region" description="Helical" evidence="1">
    <location>
        <begin position="3"/>
        <end position="23"/>
    </location>
</feature>
<feature type="transmembrane region" description="Helical" evidence="1">
    <location>
        <begin position="30"/>
        <end position="50"/>
    </location>
</feature>
<feature type="transmembrane region" description="Helical" evidence="1">
    <location>
        <begin position="58"/>
        <end position="78"/>
    </location>
</feature>
<feature type="transmembrane region" description="Helical" evidence="1">
    <location>
        <begin position="89"/>
        <end position="109"/>
    </location>
</feature>
<sequence>MKWWKLSGQILLLFCFAWTGEWIAKQAHLPVPGSIIGIFLLLISLKFNLVKKEWIQDGADFLLKELILFFIPSAVAVIRYRDTLTQYGIDLILIIMISTLCVTLVTGLLTELLLKRKGSTQ</sequence>
<proteinExistence type="inferred from homology"/>
<reference key="1">
    <citation type="submission" date="2008-10" db="EMBL/GenBank/DDBJ databases">
        <title>Genome sequence of Bacillus cereus B4264.</title>
        <authorList>
            <person name="Dodson R.J."/>
            <person name="Durkin A.S."/>
            <person name="Rosovitz M.J."/>
            <person name="Rasko D.A."/>
            <person name="Hoffmaster A."/>
            <person name="Ravel J."/>
            <person name="Sutton G."/>
        </authorList>
    </citation>
    <scope>NUCLEOTIDE SEQUENCE [LARGE SCALE GENOMIC DNA]</scope>
    <source>
        <strain>B4264</strain>
    </source>
</reference>